<reference key="1">
    <citation type="journal article" date="2006" name="J. Bacteriol.">
        <title>The genome sequence of the obligately chemolithoautotrophic, facultatively anaerobic bacterium Thiobacillus denitrificans.</title>
        <authorList>
            <person name="Beller H.R."/>
            <person name="Chain P.S."/>
            <person name="Letain T.E."/>
            <person name="Chakicherla A."/>
            <person name="Larimer F.W."/>
            <person name="Richardson P.M."/>
            <person name="Coleman M.A."/>
            <person name="Wood A.P."/>
            <person name="Kelly D.P."/>
        </authorList>
    </citation>
    <scope>NUCLEOTIDE SEQUENCE [LARGE SCALE GENOMIC DNA]</scope>
    <source>
        <strain>ATCC 25259 / T1</strain>
    </source>
</reference>
<organism>
    <name type="scientific">Thiobacillus denitrificans (strain ATCC 25259 / T1)</name>
    <dbReference type="NCBI Taxonomy" id="292415"/>
    <lineage>
        <taxon>Bacteria</taxon>
        <taxon>Pseudomonadati</taxon>
        <taxon>Pseudomonadota</taxon>
        <taxon>Betaproteobacteria</taxon>
        <taxon>Nitrosomonadales</taxon>
        <taxon>Thiobacillaceae</taxon>
        <taxon>Thiobacillus</taxon>
    </lineage>
</organism>
<evidence type="ECO:0000255" key="1">
    <source>
        <dbReference type="HAMAP-Rule" id="MF_01361"/>
    </source>
</evidence>
<evidence type="ECO:0000305" key="2"/>
<proteinExistence type="inferred from homology"/>
<feature type="chain" id="PRO_0000256792" description="UPF0391 membrane protein Tbd_2238">
    <location>
        <begin position="1"/>
        <end position="54"/>
    </location>
</feature>
<feature type="transmembrane region" description="Helical" evidence="1">
    <location>
        <begin position="5"/>
        <end position="25"/>
    </location>
</feature>
<feature type="transmembrane region" description="Helical" evidence="1">
    <location>
        <begin position="28"/>
        <end position="48"/>
    </location>
</feature>
<accession>Q3SGQ6</accession>
<sequence length="54" mass="5753">MLYYALVFFIIAIVAAVFGFSGIAAGAVGIAKILFVVFLIMAIATFVVNLLRGR</sequence>
<protein>
    <recommendedName>
        <fullName evidence="1">UPF0391 membrane protein Tbd_2238</fullName>
    </recommendedName>
</protein>
<gene>
    <name type="ordered locus">Tbd_2238</name>
</gene>
<keyword id="KW-1003">Cell membrane</keyword>
<keyword id="KW-0472">Membrane</keyword>
<keyword id="KW-1185">Reference proteome</keyword>
<keyword id="KW-0812">Transmembrane</keyword>
<keyword id="KW-1133">Transmembrane helix</keyword>
<name>Y2238_THIDA</name>
<dbReference type="EMBL" id="CP000116">
    <property type="protein sequence ID" value="AAZ98191.1"/>
    <property type="status" value="ALT_INIT"/>
    <property type="molecule type" value="Genomic_DNA"/>
</dbReference>
<dbReference type="RefSeq" id="WP_041432730.1">
    <property type="nucleotide sequence ID" value="NC_007404.1"/>
</dbReference>
<dbReference type="STRING" id="292415.Tbd_2238"/>
<dbReference type="KEGG" id="tbd:Tbd_2238"/>
<dbReference type="eggNOG" id="COG5487">
    <property type="taxonomic scope" value="Bacteria"/>
</dbReference>
<dbReference type="HOGENOM" id="CLU_187346_0_1_4"/>
<dbReference type="Proteomes" id="UP000008291">
    <property type="component" value="Chromosome"/>
</dbReference>
<dbReference type="GO" id="GO:0005886">
    <property type="term" value="C:plasma membrane"/>
    <property type="evidence" value="ECO:0007669"/>
    <property type="project" value="UniProtKB-SubCell"/>
</dbReference>
<dbReference type="HAMAP" id="MF_01361">
    <property type="entry name" value="UPF0391"/>
    <property type="match status" value="1"/>
</dbReference>
<dbReference type="InterPro" id="IPR009760">
    <property type="entry name" value="DUF1328"/>
</dbReference>
<dbReference type="NCBIfam" id="NF010226">
    <property type="entry name" value="PRK13682.1-1"/>
    <property type="match status" value="1"/>
</dbReference>
<dbReference type="NCBIfam" id="NF010229">
    <property type="entry name" value="PRK13682.1-4"/>
    <property type="match status" value="1"/>
</dbReference>
<dbReference type="Pfam" id="PF07043">
    <property type="entry name" value="DUF1328"/>
    <property type="match status" value="1"/>
</dbReference>
<dbReference type="PIRSF" id="PIRSF036466">
    <property type="entry name" value="UCP036466"/>
    <property type="match status" value="1"/>
</dbReference>
<comment type="subcellular location">
    <subcellularLocation>
        <location evidence="1">Cell membrane</location>
        <topology evidence="1">Multi-pass membrane protein</topology>
    </subcellularLocation>
</comment>
<comment type="similarity">
    <text evidence="1">Belongs to the UPF0391 family.</text>
</comment>
<comment type="sequence caution" evidence="2">
    <conflict type="erroneous initiation">
        <sequence resource="EMBL-CDS" id="AAZ98191"/>
    </conflict>
</comment>